<evidence type="ECO:0000255" key="1">
    <source>
        <dbReference type="HAMAP-Rule" id="MF_00362"/>
    </source>
</evidence>
<evidence type="ECO:0000305" key="2"/>
<proteinExistence type="inferred from homology"/>
<feature type="chain" id="PRO_1000120909" description="Large ribosomal subunit protein uL10">
    <location>
        <begin position="1"/>
        <end position="166"/>
    </location>
</feature>
<sequence length="166" mass="18554">MSKVIEMKEKVVAEITEKFEKSIAAVVVDYRGLKVEEVTELRAKFREAGVEYKVYKNTMMRRAARNAGMEEMVADLVGPNAVAFSYEDPVAPARILNDFAKNHKALELKVGFVEGSFYDEEKLKELASVPSREVLIAKLLSSFNAPMANFACLIKAIADKKTEQEA</sequence>
<dbReference type="EMBL" id="CP000724">
    <property type="protein sequence ID" value="ABR50560.1"/>
    <property type="molecule type" value="Genomic_DNA"/>
</dbReference>
<dbReference type="RefSeq" id="WP_012065451.1">
    <property type="nucleotide sequence ID" value="NC_009633.1"/>
</dbReference>
<dbReference type="SMR" id="A6TWJ2"/>
<dbReference type="STRING" id="293826.Amet_4488"/>
<dbReference type="KEGG" id="amt:Amet_4488"/>
<dbReference type="eggNOG" id="COG0244">
    <property type="taxonomic scope" value="Bacteria"/>
</dbReference>
<dbReference type="HOGENOM" id="CLU_092227_2_0_9"/>
<dbReference type="OrthoDB" id="9808307at2"/>
<dbReference type="Proteomes" id="UP000001572">
    <property type="component" value="Chromosome"/>
</dbReference>
<dbReference type="GO" id="GO:1990904">
    <property type="term" value="C:ribonucleoprotein complex"/>
    <property type="evidence" value="ECO:0007669"/>
    <property type="project" value="UniProtKB-KW"/>
</dbReference>
<dbReference type="GO" id="GO:0005840">
    <property type="term" value="C:ribosome"/>
    <property type="evidence" value="ECO:0007669"/>
    <property type="project" value="UniProtKB-KW"/>
</dbReference>
<dbReference type="GO" id="GO:0070180">
    <property type="term" value="F:large ribosomal subunit rRNA binding"/>
    <property type="evidence" value="ECO:0007669"/>
    <property type="project" value="UniProtKB-UniRule"/>
</dbReference>
<dbReference type="GO" id="GO:0006412">
    <property type="term" value="P:translation"/>
    <property type="evidence" value="ECO:0007669"/>
    <property type="project" value="UniProtKB-UniRule"/>
</dbReference>
<dbReference type="CDD" id="cd05797">
    <property type="entry name" value="Ribosomal_L10"/>
    <property type="match status" value="1"/>
</dbReference>
<dbReference type="Gene3D" id="3.30.70.1730">
    <property type="match status" value="1"/>
</dbReference>
<dbReference type="Gene3D" id="6.10.250.290">
    <property type="match status" value="1"/>
</dbReference>
<dbReference type="HAMAP" id="MF_00362">
    <property type="entry name" value="Ribosomal_uL10"/>
    <property type="match status" value="1"/>
</dbReference>
<dbReference type="InterPro" id="IPR001790">
    <property type="entry name" value="Ribosomal_uL10"/>
</dbReference>
<dbReference type="InterPro" id="IPR043141">
    <property type="entry name" value="Ribosomal_uL10-like_sf"/>
</dbReference>
<dbReference type="InterPro" id="IPR022973">
    <property type="entry name" value="Ribosomal_uL10_bac"/>
</dbReference>
<dbReference type="InterPro" id="IPR047865">
    <property type="entry name" value="Ribosomal_uL10_bac_type"/>
</dbReference>
<dbReference type="NCBIfam" id="NF000955">
    <property type="entry name" value="PRK00099.1-1"/>
    <property type="match status" value="1"/>
</dbReference>
<dbReference type="PANTHER" id="PTHR11560">
    <property type="entry name" value="39S RIBOSOMAL PROTEIN L10, MITOCHONDRIAL"/>
    <property type="match status" value="1"/>
</dbReference>
<dbReference type="Pfam" id="PF00466">
    <property type="entry name" value="Ribosomal_L10"/>
    <property type="match status" value="1"/>
</dbReference>
<dbReference type="SUPFAM" id="SSF160369">
    <property type="entry name" value="Ribosomal protein L10-like"/>
    <property type="match status" value="1"/>
</dbReference>
<name>RL10_ALKMQ</name>
<accession>A6TWJ2</accession>
<reference key="1">
    <citation type="journal article" date="2016" name="Genome Announc.">
        <title>Complete genome sequence of Alkaliphilus metalliredigens strain QYMF, an alkaliphilic and metal-reducing bacterium isolated from borax-contaminated leachate ponds.</title>
        <authorList>
            <person name="Hwang C."/>
            <person name="Copeland A."/>
            <person name="Lucas S."/>
            <person name="Lapidus A."/>
            <person name="Barry K."/>
            <person name="Detter J.C."/>
            <person name="Glavina Del Rio T."/>
            <person name="Hammon N."/>
            <person name="Israni S."/>
            <person name="Dalin E."/>
            <person name="Tice H."/>
            <person name="Pitluck S."/>
            <person name="Chertkov O."/>
            <person name="Brettin T."/>
            <person name="Bruce D."/>
            <person name="Han C."/>
            <person name="Schmutz J."/>
            <person name="Larimer F."/>
            <person name="Land M.L."/>
            <person name="Hauser L."/>
            <person name="Kyrpides N."/>
            <person name="Mikhailova N."/>
            <person name="Ye Q."/>
            <person name="Zhou J."/>
            <person name="Richardson P."/>
            <person name="Fields M.W."/>
        </authorList>
    </citation>
    <scope>NUCLEOTIDE SEQUENCE [LARGE SCALE GENOMIC DNA]</scope>
    <source>
        <strain>QYMF</strain>
    </source>
</reference>
<protein>
    <recommendedName>
        <fullName evidence="1">Large ribosomal subunit protein uL10</fullName>
    </recommendedName>
    <alternativeName>
        <fullName evidence="2">50S ribosomal protein L10</fullName>
    </alternativeName>
</protein>
<organism>
    <name type="scientific">Alkaliphilus metalliredigens (strain QYMF)</name>
    <dbReference type="NCBI Taxonomy" id="293826"/>
    <lineage>
        <taxon>Bacteria</taxon>
        <taxon>Bacillati</taxon>
        <taxon>Bacillota</taxon>
        <taxon>Clostridia</taxon>
        <taxon>Peptostreptococcales</taxon>
        <taxon>Natronincolaceae</taxon>
        <taxon>Alkaliphilus</taxon>
    </lineage>
</organism>
<gene>
    <name evidence="1" type="primary">rplJ</name>
    <name type="ordered locus">Amet_4488</name>
</gene>
<comment type="function">
    <text evidence="1">Forms part of the ribosomal stalk, playing a central role in the interaction of the ribosome with GTP-bound translation factors.</text>
</comment>
<comment type="subunit">
    <text evidence="1">Part of the ribosomal stalk of the 50S ribosomal subunit. The N-terminus interacts with L11 and the large rRNA to form the base of the stalk. The C-terminus forms an elongated spine to which L12 dimers bind in a sequential fashion forming a multimeric L10(L12)X complex.</text>
</comment>
<comment type="similarity">
    <text evidence="1">Belongs to the universal ribosomal protein uL10 family.</text>
</comment>
<keyword id="KW-1185">Reference proteome</keyword>
<keyword id="KW-0687">Ribonucleoprotein</keyword>
<keyword id="KW-0689">Ribosomal protein</keyword>
<keyword id="KW-0694">RNA-binding</keyword>
<keyword id="KW-0699">rRNA-binding</keyword>